<gene>
    <name evidence="1" type="primary">rimM</name>
    <name type="ordered locus">ECDH10B_2775</name>
</gene>
<dbReference type="EMBL" id="CP000948">
    <property type="protein sequence ID" value="ACB03754.1"/>
    <property type="molecule type" value="Genomic_DNA"/>
</dbReference>
<dbReference type="RefSeq" id="WP_000043335.1">
    <property type="nucleotide sequence ID" value="NC_010473.1"/>
</dbReference>
<dbReference type="SMR" id="B1XBT0"/>
<dbReference type="GeneID" id="93774458"/>
<dbReference type="KEGG" id="ecd:ECDH10B_2775"/>
<dbReference type="HOGENOM" id="CLU_077636_1_0_6"/>
<dbReference type="GO" id="GO:0005737">
    <property type="term" value="C:cytoplasm"/>
    <property type="evidence" value="ECO:0007669"/>
    <property type="project" value="UniProtKB-SubCell"/>
</dbReference>
<dbReference type="GO" id="GO:0005840">
    <property type="term" value="C:ribosome"/>
    <property type="evidence" value="ECO:0007669"/>
    <property type="project" value="InterPro"/>
</dbReference>
<dbReference type="GO" id="GO:0043022">
    <property type="term" value="F:ribosome binding"/>
    <property type="evidence" value="ECO:0007669"/>
    <property type="project" value="InterPro"/>
</dbReference>
<dbReference type="GO" id="GO:0042274">
    <property type="term" value="P:ribosomal small subunit biogenesis"/>
    <property type="evidence" value="ECO:0007669"/>
    <property type="project" value="UniProtKB-UniRule"/>
</dbReference>
<dbReference type="GO" id="GO:0006364">
    <property type="term" value="P:rRNA processing"/>
    <property type="evidence" value="ECO:0007669"/>
    <property type="project" value="UniProtKB-UniRule"/>
</dbReference>
<dbReference type="FunFam" id="2.30.30.240:FF:000001">
    <property type="entry name" value="Ribosome maturation factor RimM"/>
    <property type="match status" value="1"/>
</dbReference>
<dbReference type="FunFam" id="2.40.30.60:FF:000001">
    <property type="entry name" value="Ribosome maturation factor RimM"/>
    <property type="match status" value="1"/>
</dbReference>
<dbReference type="Gene3D" id="2.30.30.240">
    <property type="entry name" value="PRC-barrel domain"/>
    <property type="match status" value="1"/>
</dbReference>
<dbReference type="Gene3D" id="2.40.30.60">
    <property type="entry name" value="RimM"/>
    <property type="match status" value="1"/>
</dbReference>
<dbReference type="HAMAP" id="MF_00014">
    <property type="entry name" value="Ribosome_mat_RimM"/>
    <property type="match status" value="1"/>
</dbReference>
<dbReference type="InterPro" id="IPR011033">
    <property type="entry name" value="PRC_barrel-like_sf"/>
</dbReference>
<dbReference type="InterPro" id="IPR056792">
    <property type="entry name" value="PRC_RimM"/>
</dbReference>
<dbReference type="InterPro" id="IPR011961">
    <property type="entry name" value="RimM"/>
</dbReference>
<dbReference type="InterPro" id="IPR002676">
    <property type="entry name" value="RimM_N"/>
</dbReference>
<dbReference type="InterPro" id="IPR036976">
    <property type="entry name" value="RimM_N_sf"/>
</dbReference>
<dbReference type="InterPro" id="IPR009000">
    <property type="entry name" value="Transl_B-barrel_sf"/>
</dbReference>
<dbReference type="NCBIfam" id="TIGR02273">
    <property type="entry name" value="16S_RimM"/>
    <property type="match status" value="1"/>
</dbReference>
<dbReference type="PANTHER" id="PTHR33692">
    <property type="entry name" value="RIBOSOME MATURATION FACTOR RIMM"/>
    <property type="match status" value="1"/>
</dbReference>
<dbReference type="PANTHER" id="PTHR33692:SF1">
    <property type="entry name" value="RIBOSOME MATURATION FACTOR RIMM"/>
    <property type="match status" value="1"/>
</dbReference>
<dbReference type="Pfam" id="PF24986">
    <property type="entry name" value="PRC_RimM"/>
    <property type="match status" value="1"/>
</dbReference>
<dbReference type="Pfam" id="PF01782">
    <property type="entry name" value="RimM"/>
    <property type="match status" value="1"/>
</dbReference>
<dbReference type="SUPFAM" id="SSF50346">
    <property type="entry name" value="PRC-barrel domain"/>
    <property type="match status" value="1"/>
</dbReference>
<dbReference type="SUPFAM" id="SSF50447">
    <property type="entry name" value="Translation proteins"/>
    <property type="match status" value="1"/>
</dbReference>
<organism>
    <name type="scientific">Escherichia coli (strain K12 / DH10B)</name>
    <dbReference type="NCBI Taxonomy" id="316385"/>
    <lineage>
        <taxon>Bacteria</taxon>
        <taxon>Pseudomonadati</taxon>
        <taxon>Pseudomonadota</taxon>
        <taxon>Gammaproteobacteria</taxon>
        <taxon>Enterobacterales</taxon>
        <taxon>Enterobacteriaceae</taxon>
        <taxon>Escherichia</taxon>
    </lineage>
</organism>
<feature type="chain" id="PRO_1000089499" description="Ribosome maturation factor RimM">
    <location>
        <begin position="1"/>
        <end position="182"/>
    </location>
</feature>
<feature type="domain" description="PRC barrel" evidence="1">
    <location>
        <begin position="102"/>
        <end position="182"/>
    </location>
</feature>
<name>RIMM_ECODH</name>
<comment type="function">
    <text evidence="1">An accessory protein needed during the final step in the assembly of 30S ribosomal subunit, possibly for assembly of the head region. Essential for efficient processing of 16S rRNA. May be needed both before and after RbfA during the maturation of 16S rRNA. It has affinity for free ribosomal 30S subunits but not for 70S ribosomes.</text>
</comment>
<comment type="subunit">
    <text evidence="1">Binds ribosomal protein uS19.</text>
</comment>
<comment type="subcellular location">
    <subcellularLocation>
        <location evidence="1">Cytoplasm</location>
    </subcellularLocation>
</comment>
<comment type="domain">
    <text evidence="1">The PRC barrel domain binds ribosomal protein uS19.</text>
</comment>
<comment type="similarity">
    <text evidence="1">Belongs to the RimM family.</text>
</comment>
<sequence>MSKQLTAQAPVDPIVLGKMGSSYGIRGWLRVFSSTEDAESIFDYQPWFIQKAGQWQQVQLESWKHHNQDMIIKLKGVDDRDAANLLTNCEIVVDSSQLPQLEEGDYYWKDLMGCQVVTTEGYDLGKVVDMMETGSNDVLVIKANLKDAFGIKERLVPFLDGQVIKKVDLTTRSIEVDWDPGF</sequence>
<accession>B1XBT0</accession>
<reference key="1">
    <citation type="journal article" date="2008" name="J. Bacteriol.">
        <title>The complete genome sequence of Escherichia coli DH10B: insights into the biology of a laboratory workhorse.</title>
        <authorList>
            <person name="Durfee T."/>
            <person name="Nelson R."/>
            <person name="Baldwin S."/>
            <person name="Plunkett G. III"/>
            <person name="Burland V."/>
            <person name="Mau B."/>
            <person name="Petrosino J.F."/>
            <person name="Qin X."/>
            <person name="Muzny D.M."/>
            <person name="Ayele M."/>
            <person name="Gibbs R.A."/>
            <person name="Csorgo B."/>
            <person name="Posfai G."/>
            <person name="Weinstock G.M."/>
            <person name="Blattner F.R."/>
        </authorList>
    </citation>
    <scope>NUCLEOTIDE SEQUENCE [LARGE SCALE GENOMIC DNA]</scope>
    <source>
        <strain>K12 / DH10B</strain>
    </source>
</reference>
<keyword id="KW-0143">Chaperone</keyword>
<keyword id="KW-0963">Cytoplasm</keyword>
<keyword id="KW-0690">Ribosome biogenesis</keyword>
<keyword id="KW-0698">rRNA processing</keyword>
<protein>
    <recommendedName>
        <fullName evidence="1">Ribosome maturation factor RimM</fullName>
    </recommendedName>
</protein>
<evidence type="ECO:0000255" key="1">
    <source>
        <dbReference type="HAMAP-Rule" id="MF_00014"/>
    </source>
</evidence>
<proteinExistence type="inferred from homology"/>